<feature type="chain" id="PRO_0000287433" description="Holliday junction recognition protein">
    <location>
        <begin position="1"/>
        <end position="748"/>
    </location>
</feature>
<feature type="region of interest" description="Disordered" evidence="2">
    <location>
        <begin position="191"/>
        <end position="226"/>
    </location>
</feature>
<feature type="region of interest" description="Disordered" evidence="2">
    <location>
        <begin position="512"/>
        <end position="574"/>
    </location>
</feature>
<feature type="region of interest" description="Disordered" evidence="2">
    <location>
        <begin position="670"/>
        <end position="748"/>
    </location>
</feature>
<feature type="compositionally biased region" description="Polar residues" evidence="2">
    <location>
        <begin position="524"/>
        <end position="562"/>
    </location>
</feature>
<feature type="compositionally biased region" description="Basic and acidic residues" evidence="2">
    <location>
        <begin position="565"/>
        <end position="574"/>
    </location>
</feature>
<feature type="compositionally biased region" description="Polar residues" evidence="2">
    <location>
        <begin position="688"/>
        <end position="699"/>
    </location>
</feature>
<feature type="compositionally biased region" description="Basic and acidic residues" evidence="2">
    <location>
        <begin position="721"/>
        <end position="748"/>
    </location>
</feature>
<feature type="modified residue" description="Phosphoserine" evidence="23">
    <location>
        <position position="123"/>
    </location>
</feature>
<feature type="modified residue" description="Phosphoserine" evidence="20 23">
    <location>
        <position position="140"/>
    </location>
</feature>
<feature type="modified residue" description="Phosphoserine" evidence="19 26">
    <location>
        <position position="185"/>
    </location>
</feature>
<feature type="modified residue" description="Phosphoserine" evidence="26">
    <location>
        <position position="201"/>
    </location>
</feature>
<feature type="modified residue" description="Phosphoserine" evidence="26">
    <location>
        <position position="211"/>
    </location>
</feature>
<feature type="modified residue" description="Phosphoserine" evidence="1">
    <location>
        <position position="412"/>
    </location>
</feature>
<feature type="modified residue" description="Phosphoserine" evidence="20 26">
    <location>
        <position position="448"/>
    </location>
</feature>
<feature type="modified residue" description="Phosphoserine" evidence="18 20 21 22 23 24 25 26">
    <location>
        <position position="473"/>
    </location>
</feature>
<feature type="modified residue" description="Phosphoserine; by PKB/AKT1" evidence="6 26">
    <location>
        <position position="486"/>
    </location>
</feature>
<feature type="modified residue" description="Phosphoserine" evidence="26">
    <location>
        <position position="496"/>
    </location>
</feature>
<feature type="modified residue" description="Phosphoserine" evidence="24">
    <location>
        <position position="595"/>
    </location>
</feature>
<feature type="modified residue" description="Phosphoserine" evidence="20 26">
    <location>
        <position position="642"/>
    </location>
</feature>
<feature type="cross-link" description="Glycyl lysine isopeptide (Lys-Gly) (interchain with G-Cter in SUMO2)" evidence="27">
    <location>
        <position position="354"/>
    </location>
</feature>
<feature type="cross-link" description="Glycyl lysine isopeptide (Lys-Gly) (interchain with G-Cter in SUMO2)" evidence="27">
    <location>
        <position position="581"/>
    </location>
</feature>
<feature type="cross-link" description="Glycyl lysine isopeptide (Lys-Gly) (interchain with G-Cter in SUMO2)" evidence="27">
    <location>
        <position position="586"/>
    </location>
</feature>
<feature type="splice variant" id="VSP_037467" description="In isoform 3." evidence="13">
    <location>
        <begin position="81"/>
        <end position="165"/>
    </location>
</feature>
<feature type="splice variant" id="VSP_037468" description="In isoform 2." evidence="13">
    <location>
        <begin position="81"/>
        <end position="134"/>
    </location>
</feature>
<feature type="sequence variant" id="VAR_056912" description="In dbSNP:rs2302154.">
    <original>T</original>
    <variation>A</variation>
    <location>
        <position position="4"/>
    </location>
</feature>
<feature type="sequence variant" id="VAR_057946" description="In dbSNP:rs2286430." evidence="3 4 7 12">
    <original>E</original>
    <variation>K</variation>
    <location>
        <position position="76"/>
    </location>
</feature>
<feature type="sequence variant" id="VAR_057947" description="In dbSNP:rs3806589." evidence="3 7 12 26">
    <original>R</original>
    <variation>G</variation>
    <location>
        <position position="199"/>
    </location>
</feature>
<feature type="sequence variant" id="VAR_057948" description="In dbSNP:rs3732215." evidence="3 4 7 12">
    <original>S</original>
    <variation>C</variation>
    <location>
        <position position="295"/>
    </location>
</feature>
<feature type="sequence variant" id="VAR_056913" description="In dbSNP:rs17863822.">
    <original>S</original>
    <variation>T</variation>
    <location>
        <position position="548"/>
    </location>
</feature>
<feature type="sequence variant" id="VAR_056914" description="In dbSNP:rs3821238." evidence="3">
    <original>S</original>
    <variation>C</variation>
    <location>
        <position position="549"/>
    </location>
</feature>
<feature type="sequence variant" id="VAR_056915" description="In dbSNP:rs3771333.">
    <original>E</original>
    <variation>D</variation>
    <location>
        <position position="568"/>
    </location>
</feature>
<feature type="sequence variant" id="VAR_056916" description="In dbSNP:rs12582." evidence="3">
    <original>S</original>
    <variation>F</variation>
    <location>
        <position position="691"/>
    </location>
</feature>
<feature type="sequence variant" id="VAR_057949" description="In dbSNP:rs10511." evidence="3">
    <original>E</original>
    <variation>G</variation>
    <location>
        <position position="723"/>
    </location>
</feature>
<feature type="mutagenesis site" description="Loss of phosphorylation by AKT1 and binding to YWHAG." evidence="6">
    <original>S</original>
    <variation>A</variation>
    <location>
        <position position="486"/>
    </location>
</feature>
<feature type="sequence conflict" description="In Ref. 3; BAG63122." evidence="14" ref="3">
    <original>S</original>
    <variation>C</variation>
    <location>
        <position position="613"/>
    </location>
</feature>
<feature type="sequence conflict" description="In Ref. 3; BAG63122." evidence="14" ref="3">
    <original>E</original>
    <variation>G</variation>
    <location>
        <position position="733"/>
    </location>
</feature>
<feature type="helix" evidence="28">
    <location>
        <begin position="16"/>
        <end position="40"/>
    </location>
</feature>
<feature type="strand" evidence="28">
    <location>
        <begin position="49"/>
        <end position="51"/>
    </location>
</feature>
<feature type="turn" evidence="28">
    <location>
        <begin position="52"/>
        <end position="55"/>
    </location>
</feature>
<feature type="strand" evidence="28">
    <location>
        <begin position="56"/>
        <end position="59"/>
    </location>
</feature>
<feature type="strand" evidence="28">
    <location>
        <begin position="62"/>
        <end position="65"/>
    </location>
</feature>
<feature type="strand" evidence="28">
    <location>
        <begin position="70"/>
        <end position="73"/>
    </location>
</feature>
<proteinExistence type="evidence at protein level"/>
<keyword id="KW-0002">3D-structure</keyword>
<keyword id="KW-0025">Alternative splicing</keyword>
<keyword id="KW-0131">Cell cycle</keyword>
<keyword id="KW-0137">Centromere</keyword>
<keyword id="KW-0143">Chaperone</keyword>
<keyword id="KW-0158">Chromosome</keyword>
<keyword id="KW-0238">DNA-binding</keyword>
<keyword id="KW-1017">Isopeptide bond</keyword>
<keyword id="KW-0539">Nucleus</keyword>
<keyword id="KW-0597">Phosphoprotein</keyword>
<keyword id="KW-1267">Proteomics identification</keyword>
<keyword id="KW-1185">Reference proteome</keyword>
<keyword id="KW-0832">Ubl conjugation</keyword>
<dbReference type="EMBL" id="AB101211">
    <property type="protein sequence ID" value="BAF82039.1"/>
    <property type="molecule type" value="mRNA"/>
</dbReference>
<dbReference type="EMBL" id="AB162218">
    <property type="protein sequence ID" value="BAD36741.1"/>
    <property type="molecule type" value="mRNA"/>
</dbReference>
<dbReference type="EMBL" id="AK301643">
    <property type="protein sequence ID" value="BAG63122.1"/>
    <property type="molecule type" value="mRNA"/>
</dbReference>
<dbReference type="EMBL" id="AK303109">
    <property type="protein sequence ID" value="BAG64216.1"/>
    <property type="molecule type" value="mRNA"/>
</dbReference>
<dbReference type="EMBL" id="AK074809">
    <property type="protein sequence ID" value="BAC11221.1"/>
    <property type="molecule type" value="mRNA"/>
</dbReference>
<dbReference type="EMBL" id="AC005538">
    <property type="status" value="NOT_ANNOTATED_CDS"/>
    <property type="molecule type" value="Genomic_DNA"/>
</dbReference>
<dbReference type="EMBL" id="BC001940">
    <property type="protein sequence ID" value="AAH01940.2"/>
    <property type="molecule type" value="mRNA"/>
</dbReference>
<dbReference type="EMBL" id="AL162048">
    <property type="protein sequence ID" value="CAB82391.2"/>
    <property type="status" value="ALT_SEQ"/>
    <property type="molecule type" value="mRNA"/>
</dbReference>
<dbReference type="CCDS" id="CCDS33406.1">
    <molecule id="Q8NCD3-1"/>
</dbReference>
<dbReference type="CCDS" id="CCDS63166.1">
    <molecule id="Q8NCD3-3"/>
</dbReference>
<dbReference type="CCDS" id="CCDS63167.1">
    <molecule id="Q8NCD3-2"/>
</dbReference>
<dbReference type="PIR" id="T47163">
    <property type="entry name" value="T47163"/>
</dbReference>
<dbReference type="RefSeq" id="NP_001269891.1">
    <molecule id="Q8NCD3-2"/>
    <property type="nucleotide sequence ID" value="NM_001282962.2"/>
</dbReference>
<dbReference type="RefSeq" id="NP_001269892.1">
    <molecule id="Q8NCD3-3"/>
    <property type="nucleotide sequence ID" value="NM_001282963.2"/>
</dbReference>
<dbReference type="RefSeq" id="NP_060880.3">
    <molecule id="Q8NCD3-1"/>
    <property type="nucleotide sequence ID" value="NM_018410.4"/>
</dbReference>
<dbReference type="PDB" id="3R45">
    <property type="method" value="X-ray"/>
    <property type="resolution" value="2.60 A"/>
    <property type="chains" value="C=1-80"/>
</dbReference>
<dbReference type="PDBsum" id="3R45"/>
<dbReference type="SMR" id="Q8NCD3"/>
<dbReference type="BioGRID" id="120635">
    <property type="interactions" value="134"/>
</dbReference>
<dbReference type="CORUM" id="Q8NCD3"/>
<dbReference type="DIP" id="DIP-53282N"/>
<dbReference type="FunCoup" id="Q8NCD3">
    <property type="interactions" value="569"/>
</dbReference>
<dbReference type="IntAct" id="Q8NCD3">
    <property type="interactions" value="63"/>
</dbReference>
<dbReference type="MINT" id="Q8NCD3"/>
<dbReference type="STRING" id="9606.ENSP00000414109"/>
<dbReference type="GlyConnect" id="2048">
    <property type="glycosylation" value="3 N-Linked glycans (1 site)"/>
</dbReference>
<dbReference type="GlyCosmos" id="Q8NCD3">
    <property type="glycosylation" value="1 site, 6 glycans"/>
</dbReference>
<dbReference type="GlyGen" id="Q8NCD3">
    <property type="glycosylation" value="2 sites, 7 N-linked glycans (1 site), 1 O-linked glycan (1 site)"/>
</dbReference>
<dbReference type="iPTMnet" id="Q8NCD3"/>
<dbReference type="MetOSite" id="Q8NCD3"/>
<dbReference type="PhosphoSitePlus" id="Q8NCD3"/>
<dbReference type="BioMuta" id="HJURP"/>
<dbReference type="DMDM" id="239938642"/>
<dbReference type="jPOST" id="Q8NCD3"/>
<dbReference type="MassIVE" id="Q8NCD3"/>
<dbReference type="PaxDb" id="9606-ENSP00000414109"/>
<dbReference type="PeptideAtlas" id="Q8NCD3"/>
<dbReference type="ProteomicsDB" id="72875">
    <molecule id="Q8NCD3-1"/>
</dbReference>
<dbReference type="ProteomicsDB" id="72876">
    <molecule id="Q8NCD3-2"/>
</dbReference>
<dbReference type="ProteomicsDB" id="72877">
    <molecule id="Q8NCD3-3"/>
</dbReference>
<dbReference type="Pumba" id="Q8NCD3"/>
<dbReference type="Antibodypedia" id="2018">
    <property type="antibodies" value="143 antibodies from 29 providers"/>
</dbReference>
<dbReference type="DNASU" id="55355"/>
<dbReference type="Ensembl" id="ENST00000411486.7">
    <molecule id="Q8NCD3-1"/>
    <property type="protein sequence ID" value="ENSP00000414109.1"/>
    <property type="gene ID" value="ENSG00000123485.12"/>
</dbReference>
<dbReference type="Ensembl" id="ENST00000432087.5">
    <molecule id="Q8NCD3-2"/>
    <property type="protein sequence ID" value="ENSP00000407208.1"/>
    <property type="gene ID" value="ENSG00000123485.12"/>
</dbReference>
<dbReference type="Ensembl" id="ENST00000441687.5">
    <molecule id="Q8NCD3-3"/>
    <property type="protein sequence ID" value="ENSP00000401944.1"/>
    <property type="gene ID" value="ENSG00000123485.12"/>
</dbReference>
<dbReference type="GeneID" id="55355"/>
<dbReference type="KEGG" id="hsa:55355"/>
<dbReference type="MANE-Select" id="ENST00000411486.7">
    <property type="protein sequence ID" value="ENSP00000414109.1"/>
    <property type="RefSeq nucleotide sequence ID" value="NM_018410.5"/>
    <property type="RefSeq protein sequence ID" value="NP_060880.3"/>
</dbReference>
<dbReference type="UCSC" id="uc002vvg.5">
    <molecule id="Q8NCD3-1"/>
    <property type="organism name" value="human"/>
</dbReference>
<dbReference type="AGR" id="HGNC:25444"/>
<dbReference type="CTD" id="55355"/>
<dbReference type="DisGeNET" id="55355"/>
<dbReference type="GeneCards" id="HJURP"/>
<dbReference type="HGNC" id="HGNC:25444">
    <property type="gene designation" value="HJURP"/>
</dbReference>
<dbReference type="HPA" id="ENSG00000123485">
    <property type="expression patterns" value="Tissue enhanced (bone marrow, lymphoid tissue)"/>
</dbReference>
<dbReference type="MIM" id="612667">
    <property type="type" value="gene"/>
</dbReference>
<dbReference type="neXtProt" id="NX_Q8NCD3"/>
<dbReference type="OpenTargets" id="ENSG00000123485"/>
<dbReference type="PharmGKB" id="PA162390937"/>
<dbReference type="VEuPathDB" id="HostDB:ENSG00000123485"/>
<dbReference type="eggNOG" id="ENOG502SJZT">
    <property type="taxonomic scope" value="Eukaryota"/>
</dbReference>
<dbReference type="GeneTree" id="ENSGT00390000005575"/>
<dbReference type="InParanoid" id="Q8NCD3"/>
<dbReference type="OMA" id="SFIAHSW"/>
<dbReference type="OrthoDB" id="9948556at2759"/>
<dbReference type="PAN-GO" id="Q8NCD3">
    <property type="GO annotations" value="3 GO annotations based on evolutionary models"/>
</dbReference>
<dbReference type="PhylomeDB" id="Q8NCD3"/>
<dbReference type="TreeFam" id="TF336293"/>
<dbReference type="PathwayCommons" id="Q8NCD3"/>
<dbReference type="Reactome" id="R-HSA-606279">
    <property type="pathway name" value="Deposition of new CENPA-containing nucleosomes at the centromere"/>
</dbReference>
<dbReference type="SignaLink" id="Q8NCD3"/>
<dbReference type="SIGNOR" id="Q8NCD3"/>
<dbReference type="BioGRID-ORCS" id="55355">
    <property type="hits" value="716 hits in 1169 CRISPR screens"/>
</dbReference>
<dbReference type="ChiTaRS" id="HJURP">
    <property type="organism name" value="human"/>
</dbReference>
<dbReference type="GenomeRNAi" id="55355"/>
<dbReference type="Pharos" id="Q8NCD3">
    <property type="development level" value="Tbio"/>
</dbReference>
<dbReference type="PRO" id="PR:Q8NCD3"/>
<dbReference type="Proteomes" id="UP000005640">
    <property type="component" value="Chromosome 2"/>
</dbReference>
<dbReference type="RNAct" id="Q8NCD3">
    <property type="molecule type" value="protein"/>
</dbReference>
<dbReference type="Bgee" id="ENSG00000123485">
    <property type="expression patterns" value="Expressed in ventricular zone and 119 other cell types or tissues"/>
</dbReference>
<dbReference type="ExpressionAtlas" id="Q8NCD3">
    <property type="expression patterns" value="baseline and differential"/>
</dbReference>
<dbReference type="GO" id="GO:0000775">
    <property type="term" value="C:chromosome, centromeric region"/>
    <property type="evidence" value="ECO:0000314"/>
    <property type="project" value="UniProtKB"/>
</dbReference>
<dbReference type="GO" id="GO:0005829">
    <property type="term" value="C:cytosol"/>
    <property type="evidence" value="ECO:0000314"/>
    <property type="project" value="HPA"/>
</dbReference>
<dbReference type="GO" id="GO:0000776">
    <property type="term" value="C:kinetochore"/>
    <property type="evidence" value="ECO:0000314"/>
    <property type="project" value="UniProtKB"/>
</dbReference>
<dbReference type="GO" id="GO:0005730">
    <property type="term" value="C:nucleolus"/>
    <property type="evidence" value="ECO:0000314"/>
    <property type="project" value="HPA"/>
</dbReference>
<dbReference type="GO" id="GO:0005654">
    <property type="term" value="C:nucleoplasm"/>
    <property type="evidence" value="ECO:0000314"/>
    <property type="project" value="HPA"/>
</dbReference>
<dbReference type="GO" id="GO:0003677">
    <property type="term" value="F:DNA binding"/>
    <property type="evidence" value="ECO:0007669"/>
    <property type="project" value="UniProtKB-KW"/>
</dbReference>
<dbReference type="GO" id="GO:0042393">
    <property type="term" value="F:histone binding"/>
    <property type="evidence" value="ECO:0000314"/>
    <property type="project" value="UniProtKB"/>
</dbReference>
<dbReference type="GO" id="GO:0042802">
    <property type="term" value="F:identical protein binding"/>
    <property type="evidence" value="ECO:0000353"/>
    <property type="project" value="IntAct"/>
</dbReference>
<dbReference type="GO" id="GO:0034080">
    <property type="term" value="P:CENP-A containing chromatin assembly"/>
    <property type="evidence" value="ECO:0000315"/>
    <property type="project" value="UniProtKB"/>
</dbReference>
<dbReference type="GO" id="GO:0007059">
    <property type="term" value="P:chromosome segregation"/>
    <property type="evidence" value="ECO:0000315"/>
    <property type="project" value="UniProtKB"/>
</dbReference>
<dbReference type="GO" id="GO:0051101">
    <property type="term" value="P:regulation of DNA binding"/>
    <property type="evidence" value="ECO:0000314"/>
    <property type="project" value="UniProtKB"/>
</dbReference>
<dbReference type="GO" id="GO:0043254">
    <property type="term" value="P:regulation of protein-containing complex assembly"/>
    <property type="evidence" value="ECO:0000314"/>
    <property type="project" value="UniProtKB"/>
</dbReference>
<dbReference type="Gene3D" id="6.10.250.2320">
    <property type="match status" value="1"/>
</dbReference>
<dbReference type="IDEAL" id="IID00283"/>
<dbReference type="InterPro" id="IPR022102">
    <property type="entry name" value="HJURP_C"/>
</dbReference>
<dbReference type="InterPro" id="IPR021052">
    <property type="entry name" value="HJURP_central_dom"/>
</dbReference>
<dbReference type="InterPro" id="IPR018465">
    <property type="entry name" value="Scm3/HJURP"/>
</dbReference>
<dbReference type="PANTHER" id="PTHR15992">
    <property type="entry name" value="HOLLIDAY JUNCTION RECOGNITION PROTEIN"/>
    <property type="match status" value="1"/>
</dbReference>
<dbReference type="PANTHER" id="PTHR15992:SF5">
    <property type="entry name" value="HOLLIDAY JUNCTION RECOGNITION PROTEIN"/>
    <property type="match status" value="1"/>
</dbReference>
<dbReference type="Pfam" id="PF12347">
    <property type="entry name" value="HJURP_C"/>
    <property type="match status" value="2"/>
</dbReference>
<dbReference type="Pfam" id="PF12346">
    <property type="entry name" value="HJURP_mid"/>
    <property type="match status" value="1"/>
</dbReference>
<dbReference type="Pfam" id="PF10384">
    <property type="entry name" value="Scm3"/>
    <property type="match status" value="1"/>
</dbReference>
<gene>
    <name type="primary">HJURP</name>
    <name type="synonym">FAKTS</name>
    <name evidence="17" type="synonym">FLEG1</name>
    <name type="synonym">URLC9</name>
</gene>
<sequence length="748" mass="83539">MLGTLRAMEGEDVEDDQLLQKLRASRRRFQRRMQRLIEKYNQPFEDTPVVQMATLTYETPQGLRIWGGRLIKERNEGEIQDSSMKPADRTDGSVQAAAWGPELPSHRTVLGADSKSGEVDATSDQEESVAWALAPAVPQSPLKNELRRKYLTQVDILLQGAEYFECAGNRAGRDVRVTPLPSLASPAVPAPGYCSRISRKSPGDPAKPASSPREWDPLHPSSTDMALVPRNDSLSLQETSSSSFLSSQPFEDDDICNVTISDLYAGMLHSMSRLLSTKPSSIISTKTFIMQNWNSRRRHRYKSRMNKTYCKGARRSQRSSKENFIPCSEPVKGTGALRDCKNVLDVSCRKTGLKLEKAFLEVNRPQIHKLDPSWKERKVTPSKYSSLIYFDSSATYNLDEENRFRTLKWLISPVKIVSRPTIRQGHGENRQREIEIRFDQLHREYCLSPRNQPRRMCLPDSWAMNMYRGGPASPGGLQGLETRRLSLPSSKAKAKSLSEAFENLGKRSLEAGRCLPKSDSSSSLPKTNPTHSATRPQQTSDLHVQGNSSGIFRKSVSPSKTLSVPDKEVPGHGRNRYDEIKEEFDKLHQKYCLKSPGQMTVPLCIGVSTDKASMEVRYQTEGFLGKLNPDPHFQGFQKLPSSPLGCRKSLLGSTAIEAPSSTCVARAITRDGTRDHQFPAKRPRLSEPQGSGRQGNSLGASDGVDNTVRPGDQGSSSQPNSEERGENTSYRMEEKSDFMLEKLETKSV</sequence>
<evidence type="ECO:0000250" key="1">
    <source>
        <dbReference type="UniProtKB" id="Q6PG16"/>
    </source>
</evidence>
<evidence type="ECO:0000256" key="2">
    <source>
        <dbReference type="SAM" id="MobiDB-lite"/>
    </source>
</evidence>
<evidence type="ECO:0000269" key="3">
    <source>
    </source>
</evidence>
<evidence type="ECO:0000269" key="4">
    <source>
    </source>
</evidence>
<evidence type="ECO:0000269" key="5">
    <source>
    </source>
</evidence>
<evidence type="ECO:0000269" key="6">
    <source>
    </source>
</evidence>
<evidence type="ECO:0000269" key="7">
    <source>
    </source>
</evidence>
<evidence type="ECO:0000269" key="8">
    <source>
    </source>
</evidence>
<evidence type="ECO:0000269" key="9">
    <source>
    </source>
</evidence>
<evidence type="ECO:0000269" key="10">
    <source>
    </source>
</evidence>
<evidence type="ECO:0000269" key="11">
    <source>
    </source>
</evidence>
<evidence type="ECO:0000269" key="12">
    <source ref="2"/>
</evidence>
<evidence type="ECO:0000303" key="13">
    <source>
    </source>
</evidence>
<evidence type="ECO:0000305" key="14"/>
<evidence type="ECO:0000312" key="15">
    <source>
        <dbReference type="EMBL" id="AAH01940.2"/>
    </source>
</evidence>
<evidence type="ECO:0000312" key="16">
    <source>
        <dbReference type="EMBL" id="BAC11221.1"/>
    </source>
</evidence>
<evidence type="ECO:0000312" key="17">
    <source>
        <dbReference type="EMBL" id="BAD36741.1"/>
    </source>
</evidence>
<evidence type="ECO:0007744" key="18">
    <source>
    </source>
</evidence>
<evidence type="ECO:0007744" key="19">
    <source>
    </source>
</evidence>
<evidence type="ECO:0007744" key="20">
    <source>
    </source>
</evidence>
<evidence type="ECO:0007744" key="21">
    <source>
    </source>
</evidence>
<evidence type="ECO:0007744" key="22">
    <source>
    </source>
</evidence>
<evidence type="ECO:0007744" key="23">
    <source>
    </source>
</evidence>
<evidence type="ECO:0007744" key="24">
    <source>
    </source>
</evidence>
<evidence type="ECO:0007744" key="25">
    <source>
    </source>
</evidence>
<evidence type="ECO:0007744" key="26">
    <source>
    </source>
</evidence>
<evidence type="ECO:0007744" key="27">
    <source>
    </source>
</evidence>
<evidence type="ECO:0007829" key="28">
    <source>
        <dbReference type="PDB" id="3R45"/>
    </source>
</evidence>
<reference key="1">
    <citation type="journal article" date="2007" name="Cancer Res.">
        <title>Activation of Holliday junction recognizing protein involved in the chromosomal stability and immortality of cancer cells.</title>
        <authorList>
            <person name="Kato T."/>
            <person name="Sato N."/>
            <person name="Hayama S."/>
            <person name="Yamabuki T."/>
            <person name="Ito T."/>
            <person name="Miyamoto M."/>
            <person name="Kondo S."/>
            <person name="Nakamura Y."/>
            <person name="Daigo Y."/>
        </authorList>
    </citation>
    <scope>NUCLEOTIDE SEQUENCE [MRNA] (ISOFORM 1)</scope>
    <scope>SUBCELLULAR LOCATION</scope>
    <scope>INTERACTION WITH MSH5 AND NBN</scope>
    <scope>DNA-BINDING</scope>
    <scope>TISSUE SPECIFICITY</scope>
    <scope>VARIANTS LYS-76; GLY-199 AND CYS-295</scope>
</reference>
<reference evidence="14 17" key="2">
    <citation type="submission" date="2004-02" db="EMBL/GenBank/DDBJ databases">
        <title>Impaired cytoplasmic localization and nuclear accumulation of a novel gene product, hFLEG1, associated with hepatocellular carcinoma development.</title>
        <authorList>
            <person name="Koike N."/>
            <person name="Sumii M."/>
            <person name="Ikura T."/>
            <person name="Masuda Y."/>
            <person name="Wakida K."/>
            <person name="Uchida T."/>
            <person name="Asahara T."/>
            <person name="Usui T."/>
            <person name="Shimamoto F."/>
            <person name="Chayama K."/>
            <person name="Fukumoto M."/>
            <person name="Kamiya K."/>
        </authorList>
    </citation>
    <scope>NUCLEOTIDE SEQUENCE [MRNA] (ISOFORM 1)</scope>
    <scope>VARIANTS LYS-76; GLY-199 AND CYS-295</scope>
</reference>
<reference evidence="16" key="3">
    <citation type="journal article" date="2004" name="Nat. Genet.">
        <title>Complete sequencing and characterization of 21,243 full-length human cDNAs.</title>
        <authorList>
            <person name="Ota T."/>
            <person name="Suzuki Y."/>
            <person name="Nishikawa T."/>
            <person name="Otsuki T."/>
            <person name="Sugiyama T."/>
            <person name="Irie R."/>
            <person name="Wakamatsu A."/>
            <person name="Hayashi K."/>
            <person name="Sato H."/>
            <person name="Nagai K."/>
            <person name="Kimura K."/>
            <person name="Makita H."/>
            <person name="Sekine M."/>
            <person name="Obayashi M."/>
            <person name="Nishi T."/>
            <person name="Shibahara T."/>
            <person name="Tanaka T."/>
            <person name="Ishii S."/>
            <person name="Yamamoto J."/>
            <person name="Saito K."/>
            <person name="Kawai Y."/>
            <person name="Isono Y."/>
            <person name="Nakamura Y."/>
            <person name="Nagahari K."/>
            <person name="Murakami K."/>
            <person name="Yasuda T."/>
            <person name="Iwayanagi T."/>
            <person name="Wagatsuma M."/>
            <person name="Shiratori A."/>
            <person name="Sudo H."/>
            <person name="Hosoiri T."/>
            <person name="Kaku Y."/>
            <person name="Kodaira H."/>
            <person name="Kondo H."/>
            <person name="Sugawara M."/>
            <person name="Takahashi M."/>
            <person name="Kanda K."/>
            <person name="Yokoi T."/>
            <person name="Furuya T."/>
            <person name="Kikkawa E."/>
            <person name="Omura Y."/>
            <person name="Abe K."/>
            <person name="Kamihara K."/>
            <person name="Katsuta N."/>
            <person name="Sato K."/>
            <person name="Tanikawa M."/>
            <person name="Yamazaki M."/>
            <person name="Ninomiya K."/>
            <person name="Ishibashi T."/>
            <person name="Yamashita H."/>
            <person name="Murakawa K."/>
            <person name="Fujimori K."/>
            <person name="Tanai H."/>
            <person name="Kimata M."/>
            <person name="Watanabe M."/>
            <person name="Hiraoka S."/>
            <person name="Chiba Y."/>
            <person name="Ishida S."/>
            <person name="Ono Y."/>
            <person name="Takiguchi S."/>
            <person name="Watanabe S."/>
            <person name="Yosida M."/>
            <person name="Hotuta T."/>
            <person name="Kusano J."/>
            <person name="Kanehori K."/>
            <person name="Takahashi-Fujii A."/>
            <person name="Hara H."/>
            <person name="Tanase T.-O."/>
            <person name="Nomura Y."/>
            <person name="Togiya S."/>
            <person name="Komai F."/>
            <person name="Hara R."/>
            <person name="Takeuchi K."/>
            <person name="Arita M."/>
            <person name="Imose N."/>
            <person name="Musashino K."/>
            <person name="Yuuki H."/>
            <person name="Oshima A."/>
            <person name="Sasaki N."/>
            <person name="Aotsuka S."/>
            <person name="Yoshikawa Y."/>
            <person name="Matsunawa H."/>
            <person name="Ichihara T."/>
            <person name="Shiohata N."/>
            <person name="Sano S."/>
            <person name="Moriya S."/>
            <person name="Momiyama H."/>
            <person name="Satoh N."/>
            <person name="Takami S."/>
            <person name="Terashima Y."/>
            <person name="Suzuki O."/>
            <person name="Nakagawa S."/>
            <person name="Senoh A."/>
            <person name="Mizoguchi H."/>
            <person name="Goto Y."/>
            <person name="Shimizu F."/>
            <person name="Wakebe H."/>
            <person name="Hishigaki H."/>
            <person name="Watanabe T."/>
            <person name="Sugiyama A."/>
            <person name="Takemoto M."/>
            <person name="Kawakami B."/>
            <person name="Yamazaki M."/>
            <person name="Watanabe K."/>
            <person name="Kumagai A."/>
            <person name="Itakura S."/>
            <person name="Fukuzumi Y."/>
            <person name="Fujimori Y."/>
            <person name="Komiyama M."/>
            <person name="Tashiro H."/>
            <person name="Tanigami A."/>
            <person name="Fujiwara T."/>
            <person name="Ono T."/>
            <person name="Yamada K."/>
            <person name="Fujii Y."/>
            <person name="Ozaki K."/>
            <person name="Hirao M."/>
            <person name="Ohmori Y."/>
            <person name="Kawabata A."/>
            <person name="Hikiji T."/>
            <person name="Kobatake N."/>
            <person name="Inagaki H."/>
            <person name="Ikema Y."/>
            <person name="Okamoto S."/>
            <person name="Okitani R."/>
            <person name="Kawakami T."/>
            <person name="Noguchi S."/>
            <person name="Itoh T."/>
            <person name="Shigeta K."/>
            <person name="Senba T."/>
            <person name="Matsumura K."/>
            <person name="Nakajima Y."/>
            <person name="Mizuno T."/>
            <person name="Morinaga M."/>
            <person name="Sasaki M."/>
            <person name="Togashi T."/>
            <person name="Oyama M."/>
            <person name="Hata H."/>
            <person name="Watanabe M."/>
            <person name="Komatsu T."/>
            <person name="Mizushima-Sugano J."/>
            <person name="Satoh T."/>
            <person name="Shirai Y."/>
            <person name="Takahashi Y."/>
            <person name="Nakagawa K."/>
            <person name="Okumura K."/>
            <person name="Nagase T."/>
            <person name="Nomura N."/>
            <person name="Kikuchi H."/>
            <person name="Masuho Y."/>
            <person name="Yamashita R."/>
            <person name="Nakai K."/>
            <person name="Yada T."/>
            <person name="Nakamura Y."/>
            <person name="Ohara O."/>
            <person name="Isogai T."/>
            <person name="Sugano S."/>
        </authorList>
    </citation>
    <scope>NUCLEOTIDE SEQUENCE [LARGE SCALE MRNA] (ISOFORMS 1; 2 AND 3)</scope>
    <scope>VARIANTS LYS-76; GLY-199; CYS-295; CYS-549; PHE-691 AND GLY-723</scope>
    <source>
        <tissue>Esophagus</tissue>
        <tissue evidence="16">Teratocarcinoma</tissue>
        <tissue>Thymus</tissue>
    </source>
</reference>
<reference key="4">
    <citation type="journal article" date="2005" name="Nature">
        <title>Generation and annotation of the DNA sequences of human chromosomes 2 and 4.</title>
        <authorList>
            <person name="Hillier L.W."/>
            <person name="Graves T.A."/>
            <person name="Fulton R.S."/>
            <person name="Fulton L.A."/>
            <person name="Pepin K.H."/>
            <person name="Minx P."/>
            <person name="Wagner-McPherson C."/>
            <person name="Layman D."/>
            <person name="Wylie K."/>
            <person name="Sekhon M."/>
            <person name="Becker M.C."/>
            <person name="Fewell G.A."/>
            <person name="Delehaunty K.D."/>
            <person name="Miner T.L."/>
            <person name="Nash W.E."/>
            <person name="Kremitzki C."/>
            <person name="Oddy L."/>
            <person name="Du H."/>
            <person name="Sun H."/>
            <person name="Bradshaw-Cordum H."/>
            <person name="Ali J."/>
            <person name="Carter J."/>
            <person name="Cordes M."/>
            <person name="Harris A."/>
            <person name="Isak A."/>
            <person name="van Brunt A."/>
            <person name="Nguyen C."/>
            <person name="Du F."/>
            <person name="Courtney L."/>
            <person name="Kalicki J."/>
            <person name="Ozersky P."/>
            <person name="Abbott S."/>
            <person name="Armstrong J."/>
            <person name="Belter E.A."/>
            <person name="Caruso L."/>
            <person name="Cedroni M."/>
            <person name="Cotton M."/>
            <person name="Davidson T."/>
            <person name="Desai A."/>
            <person name="Elliott G."/>
            <person name="Erb T."/>
            <person name="Fronick C."/>
            <person name="Gaige T."/>
            <person name="Haakenson W."/>
            <person name="Haglund K."/>
            <person name="Holmes A."/>
            <person name="Harkins R."/>
            <person name="Kim K."/>
            <person name="Kruchowski S.S."/>
            <person name="Strong C.M."/>
            <person name="Grewal N."/>
            <person name="Goyea E."/>
            <person name="Hou S."/>
            <person name="Levy A."/>
            <person name="Martinka S."/>
            <person name="Mead K."/>
            <person name="McLellan M.D."/>
            <person name="Meyer R."/>
            <person name="Randall-Maher J."/>
            <person name="Tomlinson C."/>
            <person name="Dauphin-Kohlberg S."/>
            <person name="Kozlowicz-Reilly A."/>
            <person name="Shah N."/>
            <person name="Swearengen-Shahid S."/>
            <person name="Snider J."/>
            <person name="Strong J.T."/>
            <person name="Thompson J."/>
            <person name="Yoakum M."/>
            <person name="Leonard S."/>
            <person name="Pearman C."/>
            <person name="Trani L."/>
            <person name="Radionenko M."/>
            <person name="Waligorski J.E."/>
            <person name="Wang C."/>
            <person name="Rock S.M."/>
            <person name="Tin-Wollam A.-M."/>
            <person name="Maupin R."/>
            <person name="Latreille P."/>
            <person name="Wendl M.C."/>
            <person name="Yang S.-P."/>
            <person name="Pohl C."/>
            <person name="Wallis J.W."/>
            <person name="Spieth J."/>
            <person name="Bieri T.A."/>
            <person name="Berkowicz N."/>
            <person name="Nelson J.O."/>
            <person name="Osborne J."/>
            <person name="Ding L."/>
            <person name="Meyer R."/>
            <person name="Sabo A."/>
            <person name="Shotland Y."/>
            <person name="Sinha P."/>
            <person name="Wohldmann P.E."/>
            <person name="Cook L.L."/>
            <person name="Hickenbotham M.T."/>
            <person name="Eldred J."/>
            <person name="Williams D."/>
            <person name="Jones T.A."/>
            <person name="She X."/>
            <person name="Ciccarelli F.D."/>
            <person name="Izaurralde E."/>
            <person name="Taylor J."/>
            <person name="Schmutz J."/>
            <person name="Myers R.M."/>
            <person name="Cox D.R."/>
            <person name="Huang X."/>
            <person name="McPherson J.D."/>
            <person name="Mardis E.R."/>
            <person name="Clifton S.W."/>
            <person name="Warren W.C."/>
            <person name="Chinwalla A.T."/>
            <person name="Eddy S.R."/>
            <person name="Marra M.A."/>
            <person name="Ovcharenko I."/>
            <person name="Furey T.S."/>
            <person name="Miller W."/>
            <person name="Eichler E.E."/>
            <person name="Bork P."/>
            <person name="Suyama M."/>
            <person name="Torrents D."/>
            <person name="Waterston R.H."/>
            <person name="Wilson R.K."/>
        </authorList>
    </citation>
    <scope>NUCLEOTIDE SEQUENCE [LARGE SCALE GENOMIC DNA]</scope>
</reference>
<reference evidence="15" key="5">
    <citation type="journal article" date="2004" name="Genome Res.">
        <title>The status, quality, and expansion of the NIH full-length cDNA project: the Mammalian Gene Collection (MGC).</title>
        <authorList>
            <consortium name="The MGC Project Team"/>
        </authorList>
    </citation>
    <scope>NUCLEOTIDE SEQUENCE [LARGE SCALE MRNA] (ISOFORM 1)</scope>
    <scope>VARIANTS LYS-76 AND CYS-295</scope>
    <source>
        <tissue evidence="15">Lung</tissue>
    </source>
</reference>
<reference key="6">
    <citation type="journal article" date="2007" name="BMC Genomics">
        <title>The full-ORF clone resource of the German cDNA consortium.</title>
        <authorList>
            <person name="Bechtel S."/>
            <person name="Rosenfelder H."/>
            <person name="Duda A."/>
            <person name="Schmidt C.P."/>
            <person name="Ernst U."/>
            <person name="Wellenreuther R."/>
            <person name="Mehrle A."/>
            <person name="Schuster C."/>
            <person name="Bahr A."/>
            <person name="Bloecker H."/>
            <person name="Heubner D."/>
            <person name="Hoerlein A."/>
            <person name="Michel G."/>
            <person name="Wedler H."/>
            <person name="Koehrer K."/>
            <person name="Ottenwaelder B."/>
            <person name="Poustka A."/>
            <person name="Wiemann S."/>
            <person name="Schupp I."/>
        </authorList>
    </citation>
    <scope>NUCLEOTIDE SEQUENCE [LARGE SCALE MRNA] OF 254-748</scope>
    <source>
        <tissue>Melanoma</tissue>
    </source>
</reference>
<reference key="7">
    <citation type="journal article" date="2006" name="Nat. Biotechnol.">
        <title>A probability-based approach for high-throughput protein phosphorylation analysis and site localization.</title>
        <authorList>
            <person name="Beausoleil S.A."/>
            <person name="Villen J."/>
            <person name="Gerber S.A."/>
            <person name="Rush J."/>
            <person name="Gygi S.P."/>
        </authorList>
    </citation>
    <scope>PHOSPHORYLATION [LARGE SCALE ANALYSIS] AT SER-473</scope>
    <scope>IDENTIFICATION BY MASS SPECTROMETRY [LARGE SCALE ANALYSIS]</scope>
    <source>
        <tissue>Cervix carcinoma</tissue>
    </source>
</reference>
<reference key="8">
    <citation type="journal article" date="2006" name="Nat. Cell Biol.">
        <title>The human CENP-A centromeric nucleosome-associated complex.</title>
        <authorList>
            <person name="Foltz D.R."/>
            <person name="Jansen L.E.T."/>
            <person name="Black B.E."/>
            <person name="Bailey A.O."/>
            <person name="Yates J.R. III"/>
            <person name="Cleveland D.W."/>
        </authorList>
    </citation>
    <scope>IDENTIFICATION BY MASS SPECTROMETRY</scope>
    <scope>INTERACTION WITH CENPA</scope>
</reference>
<reference evidence="14" key="9">
    <citation type="journal article" date="2007" name="Proteins">
        <title>Identification of FAKTS as a novel 14-3-3-associated nuclear protein.</title>
        <authorList>
            <person name="Luhn P."/>
            <person name="Wang H."/>
            <person name="Marcus A.I."/>
            <person name="Fu H."/>
        </authorList>
    </citation>
    <scope>INTERACTION WITH 14-3-3 PROTEINS</scope>
    <scope>SUBCELLULAR LOCATION</scope>
    <scope>TISSUE SPECIFICITY</scope>
    <scope>PHOSPHORYLATION AT SER-486</scope>
    <scope>MUTAGENESIS OF SER-486</scope>
</reference>
<reference key="10">
    <citation type="journal article" date="2008" name="J. Proteome Res.">
        <title>Combining protein-based IMAC, peptide-based IMAC, and MudPIT for efficient phosphoproteomic analysis.</title>
        <authorList>
            <person name="Cantin G.T."/>
            <person name="Yi W."/>
            <person name="Lu B."/>
            <person name="Park S.K."/>
            <person name="Xu T."/>
            <person name="Lee J.-D."/>
            <person name="Yates J.R. III"/>
        </authorList>
    </citation>
    <scope>PHOSPHORYLATION [LARGE SCALE ANALYSIS] AT SER-185</scope>
    <scope>IDENTIFICATION BY MASS SPECTROMETRY [LARGE SCALE ANALYSIS]</scope>
    <source>
        <tissue>Cervix carcinoma</tissue>
    </source>
</reference>
<reference key="11">
    <citation type="journal article" date="2008" name="Mol. Cell">
        <title>Kinase-selective enrichment enables quantitative phosphoproteomics of the kinome across the cell cycle.</title>
        <authorList>
            <person name="Daub H."/>
            <person name="Olsen J.V."/>
            <person name="Bairlein M."/>
            <person name="Gnad F."/>
            <person name="Oppermann F.S."/>
            <person name="Korner R."/>
            <person name="Greff Z."/>
            <person name="Keri G."/>
            <person name="Stemmann O."/>
            <person name="Mann M."/>
        </authorList>
    </citation>
    <scope>PHOSPHORYLATION [LARGE SCALE ANALYSIS] AT SER-473</scope>
    <scope>IDENTIFICATION BY MASS SPECTROMETRY [LARGE SCALE ANALYSIS]</scope>
    <source>
        <tissue>Cervix carcinoma</tissue>
    </source>
</reference>
<reference key="12">
    <citation type="journal article" date="2008" name="Proc. Natl. Acad. Sci. U.S.A.">
        <title>A quantitative atlas of mitotic phosphorylation.</title>
        <authorList>
            <person name="Dephoure N."/>
            <person name="Zhou C."/>
            <person name="Villen J."/>
            <person name="Beausoleil S.A."/>
            <person name="Bakalarski C.E."/>
            <person name="Elledge S.J."/>
            <person name="Gygi S.P."/>
        </authorList>
    </citation>
    <scope>PHOSPHORYLATION [LARGE SCALE ANALYSIS] AT SER-140; SER-448; SER-473 AND SER-642</scope>
    <scope>IDENTIFICATION BY MASS SPECTROMETRY [LARGE SCALE ANALYSIS]</scope>
    <source>
        <tissue>Cervix carcinoma</tissue>
    </source>
</reference>
<reference key="13">
    <citation type="journal article" date="2009" name="Anal. Chem.">
        <title>Lys-N and trypsin cover complementary parts of the phosphoproteome in a refined SCX-based approach.</title>
        <authorList>
            <person name="Gauci S."/>
            <person name="Helbig A.O."/>
            <person name="Slijper M."/>
            <person name="Krijgsveld J."/>
            <person name="Heck A.J."/>
            <person name="Mohammed S."/>
        </authorList>
    </citation>
    <scope>IDENTIFICATION BY MASS SPECTROMETRY [LARGE SCALE ANALYSIS]</scope>
</reference>
<reference key="14">
    <citation type="journal article" date="2009" name="Cell">
        <title>Centromere-specific assembly of CENP-A nucleosomes is mediated by HJURP.</title>
        <authorList>
            <person name="Foltz D.R."/>
            <person name="Jansen L.E.T."/>
            <person name="Bailey A.O."/>
            <person name="Yates J.R. III"/>
            <person name="Bassett E.A."/>
            <person name="Wood S."/>
            <person name="Black B.E."/>
            <person name="Cleveland D.W."/>
        </authorList>
    </citation>
    <scope>FUNCTION</scope>
    <scope>SUBCELLULAR LOCATION</scope>
    <scope>INTERACTION WITH CENPA</scope>
</reference>
<reference key="15">
    <citation type="journal article" date="2009" name="Cell">
        <title>HJURP is a cell-cycle-dependent maintenance and deposition factor of CENP-A at centromeres.</title>
        <authorList>
            <person name="Dunleavy E.M."/>
            <person name="Roche D."/>
            <person name="Tagami H."/>
            <person name="Lacoste N."/>
            <person name="Ray-Gallet D."/>
            <person name="Nakamura Y."/>
            <person name="Daigo Y."/>
            <person name="Nakatani Y."/>
            <person name="Almouzni-Pettinotti G."/>
        </authorList>
    </citation>
    <scope>IDENTIFICATION BY MASS SPECTROMETRY</scope>
    <scope>FUNCTION</scope>
    <scope>SUBCELLULAR LOCATION</scope>
    <scope>INTERACTION WITH CENPA</scope>
</reference>
<reference key="16">
    <citation type="journal article" date="2009" name="Mol. Cell. Proteomics">
        <title>Large-scale proteomics analysis of the human kinome.</title>
        <authorList>
            <person name="Oppermann F.S."/>
            <person name="Gnad F."/>
            <person name="Olsen J.V."/>
            <person name="Hornberger R."/>
            <person name="Greff Z."/>
            <person name="Keri G."/>
            <person name="Mann M."/>
            <person name="Daub H."/>
        </authorList>
    </citation>
    <scope>PHOSPHORYLATION [LARGE SCALE ANALYSIS] AT SER-473</scope>
    <scope>IDENTIFICATION BY MASS SPECTROMETRY [LARGE SCALE ANALYSIS]</scope>
</reference>
<reference key="17">
    <citation type="journal article" date="2009" name="Sci. Signal.">
        <title>Quantitative phosphoproteomic analysis of T cell receptor signaling reveals system-wide modulation of protein-protein interactions.</title>
        <authorList>
            <person name="Mayya V."/>
            <person name="Lundgren D.H."/>
            <person name="Hwang S.-I."/>
            <person name="Rezaul K."/>
            <person name="Wu L."/>
            <person name="Eng J.K."/>
            <person name="Rodionov V."/>
            <person name="Han D.K."/>
        </authorList>
    </citation>
    <scope>PHOSPHORYLATION [LARGE SCALE ANALYSIS] AT SER-123; SER-140 AND SER-473</scope>
    <scope>IDENTIFICATION BY MASS SPECTROMETRY [LARGE SCALE ANALYSIS]</scope>
    <source>
        <tissue>Leukemic T-cell</tissue>
    </source>
</reference>
<reference key="18">
    <citation type="journal article" date="2010" name="Sci. Signal.">
        <title>Quantitative phosphoproteomics reveals widespread full phosphorylation site occupancy during mitosis.</title>
        <authorList>
            <person name="Olsen J.V."/>
            <person name="Vermeulen M."/>
            <person name="Santamaria A."/>
            <person name="Kumar C."/>
            <person name="Miller M.L."/>
            <person name="Jensen L.J."/>
            <person name="Gnad F."/>
            <person name="Cox J."/>
            <person name="Jensen T.S."/>
            <person name="Nigg E.A."/>
            <person name="Brunak S."/>
            <person name="Mann M."/>
        </authorList>
    </citation>
    <scope>PHOSPHORYLATION [LARGE SCALE ANALYSIS] AT SER-473 AND SER-595</scope>
    <scope>IDENTIFICATION BY MASS SPECTROMETRY [LARGE SCALE ANALYSIS]</scope>
    <source>
        <tissue>Cervix carcinoma</tissue>
    </source>
</reference>
<reference key="19">
    <citation type="journal article" date="2011" name="Sci. Signal.">
        <title>System-wide temporal characterization of the proteome and phosphoproteome of human embryonic stem cell differentiation.</title>
        <authorList>
            <person name="Rigbolt K.T."/>
            <person name="Prokhorova T.A."/>
            <person name="Akimov V."/>
            <person name="Henningsen J."/>
            <person name="Johansen P.T."/>
            <person name="Kratchmarova I."/>
            <person name="Kassem M."/>
            <person name="Mann M."/>
            <person name="Olsen J.V."/>
            <person name="Blagoev B."/>
        </authorList>
    </citation>
    <scope>PHOSPHORYLATION [LARGE SCALE ANALYSIS] AT SER-473</scope>
    <scope>IDENTIFICATION BY MASS SPECTROMETRY [LARGE SCALE ANALYSIS]</scope>
</reference>
<reference key="20">
    <citation type="journal article" date="2013" name="J. Proteome Res.">
        <title>Toward a comprehensive characterization of a human cancer cell phosphoproteome.</title>
        <authorList>
            <person name="Zhou H."/>
            <person name="Di Palma S."/>
            <person name="Preisinger C."/>
            <person name="Peng M."/>
            <person name="Polat A.N."/>
            <person name="Heck A.J."/>
            <person name="Mohammed S."/>
        </authorList>
    </citation>
    <scope>PHOSPHORYLATION [LARGE SCALE ANALYSIS] AT SER-185; SER-201; SER-211; SER-448; SER-473; SER-486; SER-496 AND SER-642</scope>
    <scope>VARIANT [LARGE SCALE ANALYSIS] GLY-199</scope>
    <scope>IDENTIFICATION BY MASS SPECTROMETRY [LARGE SCALE ANALYSIS]</scope>
    <source>
        <tissue>Cervix carcinoma</tissue>
        <tissue>Erythroleukemia</tissue>
    </source>
</reference>
<reference key="21">
    <citation type="journal article" date="2016" name="Mol. Cell">
        <title>The flexible ends of CENP-A nucleosome are required for mitotic fidelity.</title>
        <authorList>
            <person name="Roulland Y."/>
            <person name="Ouararhni K."/>
            <person name="Naidenov M."/>
            <person name="Ramos L."/>
            <person name="Shuaib M."/>
            <person name="Syed S.H."/>
            <person name="Lone I.N."/>
            <person name="Boopathi R."/>
            <person name="Fontaine E."/>
            <person name="Papai G."/>
            <person name="Tachiwana H."/>
            <person name="Gautier T."/>
            <person name="Skoufias D."/>
            <person name="Padmanabhan K."/>
            <person name="Bednar J."/>
            <person name="Kurumizaka H."/>
            <person name="Schultz P."/>
            <person name="Angelov D."/>
            <person name="Hamiche A."/>
            <person name="Dimitrov S."/>
        </authorList>
    </citation>
    <scope>SUBUNIT</scope>
</reference>
<reference key="22">
    <citation type="journal article" date="2017" name="Nat. Struct. Mol. Biol.">
        <title>Site-specific mapping of the human SUMO proteome reveals co-modification with phosphorylation.</title>
        <authorList>
            <person name="Hendriks I.A."/>
            <person name="Lyon D."/>
            <person name="Young C."/>
            <person name="Jensen L.J."/>
            <person name="Vertegaal A.C."/>
            <person name="Nielsen M.L."/>
        </authorList>
    </citation>
    <scope>SUMOYLATION [LARGE SCALE ANALYSIS] AT LYS-354; LYS-581 AND LYS-586</scope>
    <scope>IDENTIFICATION BY MASS SPECTROMETRY [LARGE SCALE ANALYSIS]</scope>
</reference>
<reference key="23">
    <citation type="journal article" date="2011" name="Genes Dev.">
        <title>Structure of a CENP-A-histone H4 heterodimer in complex with chaperone HJURP.</title>
        <authorList>
            <person name="Hu H."/>
            <person name="Liu Y."/>
            <person name="Wang M."/>
            <person name="Fang J."/>
            <person name="Huang H."/>
            <person name="Yang N."/>
            <person name="Li Y."/>
            <person name="Wang J."/>
            <person name="Yao X."/>
            <person name="Shi Y."/>
            <person name="Li G."/>
            <person name="Xu R.M."/>
        </authorList>
    </citation>
    <scope>X-RAY CRYSTALLOGRAPHY (2.6 ANGSTROMS) OF 1-80 IN COMPLEX WITH CENPA AND HISTONE H4</scope>
    <scope>SUBUNIT</scope>
</reference>
<comment type="function">
    <text evidence="8 9">Centromeric protein that plays a central role in the incorporation and maintenance of histone H3-like variant CENPA at centromeres. Acts as a specific chaperone for CENPA and is required for the incorporation of newly synthesized CENPA molecules into nucleosomes at replicated centromeres. Prevents CENPA-H4 tetramerization and prevents premature DNA binding by the CENPA-H4 tetramer. Directly binds Holliday junctions.</text>
</comment>
<comment type="subunit">
    <text evidence="5 6 7 8 9 10 11">Interacts with CENPA (via CATD domain); the interaction is direct and specific for CENPA since it does not interact with H3.1- or H3.3-containing nucleosomes (PubMed:16622419, PubMed:19410544, PubMed:19410545). Heterotrimer composed of HJURP, CENPA and histone H4, where HJURP interacts with the dimer formed by CENPA and histone H4 and prevents tetramerization of CENPA and H4 (PubMed:21478274). Identified in a centromere complex containing histones H2A, H2B and H4, and at least CENPA, CENPB, CENPC, CENPT, CENPN, HJURP, SUPT16H, SSRP1 and RSF1 (PubMed:27499292). Interacts with 14-3-3 family members in a phosphorylation-dependent manner (PubMed:17256767). Interacts with MSH5 and NBN (PubMed:17823411).</text>
</comment>
<comment type="interaction">
    <interactant intactId="EBI-719429">
        <id>Q8NCD3</id>
    </interactant>
    <interactant intactId="EBI-1751979">
        <id>P49450</id>
        <label>CENPA</label>
    </interactant>
    <organismsDiffer>false</organismsDiffer>
    <experiments>17</experiments>
</comment>
<comment type="interaction">
    <interactant intactId="EBI-719429">
        <id>Q8NCD3</id>
    </interactant>
    <interactant intactId="EBI-15826012">
        <id>P49450-1</id>
        <label>CENPA</label>
    </interactant>
    <organismsDiffer>false</organismsDiffer>
    <experiments>3</experiments>
</comment>
<comment type="interaction">
    <interactant intactId="EBI-719429">
        <id>Q8NCD3</id>
    </interactant>
    <interactant intactId="EBI-719429">
        <id>Q8NCD3</id>
        <label>HJURP</label>
    </interactant>
    <organismsDiffer>false</organismsDiffer>
    <experiments>4</experiments>
</comment>
<comment type="interaction">
    <interactant intactId="EBI-15825976">
        <id>Q8NCD3-1</id>
    </interactant>
    <interactant intactId="EBI-1751979">
        <id>P49450</id>
        <label>CENPA</label>
    </interactant>
    <organismsDiffer>false</organismsDiffer>
    <experiments>2</experiments>
</comment>
<comment type="subcellular location">
    <subcellularLocation>
        <location>Nucleus</location>
        <location>Nucleolus</location>
    </subcellularLocation>
    <subcellularLocation>
        <location>Chromosome</location>
        <location>Centromere</location>
    </subcellularLocation>
    <text>Localizes in centromeres during late telophase and early G1, when CENPA nucleosomes are assembled. Localizes to nucleolus during S phase, nucleolus site being often related to storage.</text>
</comment>
<comment type="alternative products">
    <event type="alternative splicing"/>
    <isoform>
        <id>Q8NCD3-1</id>
        <name>1</name>
        <sequence type="displayed"/>
    </isoform>
    <isoform>
        <id>Q8NCD3-2</id>
        <name>2</name>
        <sequence type="described" ref="VSP_037468"/>
    </isoform>
    <isoform>
        <id>Q8NCD3-3</id>
        <name>3</name>
        <sequence type="described" ref="VSP_037467"/>
    </isoform>
</comment>
<comment type="tissue specificity">
    <text evidence="6 7">According to PubMed:17256767, highly expressed in the thymus with lower levels in the placenta, small intestine, liver, skeletal muscle, and colon. According to PubMed:17823411, highly expressed in testis, and at a relatively lower level in thymus and bone marrow. Significantly overexpressed in many lung cancer samples, compared with normal lung.</text>
</comment>
<comment type="sequence caution" evidence="14">
    <conflict type="erroneous termination">
        <sequence resource="EMBL-CDS" id="CAB82391"/>
    </conflict>
    <text>Truncated C-terminus.</text>
</comment>
<accession>Q8NCD3</accession>
<accession>A8IRH5</accession>
<accession>B4DWR0</accession>
<accession>B4DZV4</accession>
<accession>Q9BUT2</accession>
<accession>Q9NSL8</accession>
<name>HJURP_HUMAN</name>
<organism>
    <name type="scientific">Homo sapiens</name>
    <name type="common">Human</name>
    <dbReference type="NCBI Taxonomy" id="9606"/>
    <lineage>
        <taxon>Eukaryota</taxon>
        <taxon>Metazoa</taxon>
        <taxon>Chordata</taxon>
        <taxon>Craniata</taxon>
        <taxon>Vertebrata</taxon>
        <taxon>Euteleostomi</taxon>
        <taxon>Mammalia</taxon>
        <taxon>Eutheria</taxon>
        <taxon>Euarchontoglires</taxon>
        <taxon>Primates</taxon>
        <taxon>Haplorrhini</taxon>
        <taxon>Catarrhini</taxon>
        <taxon>Hominidae</taxon>
        <taxon>Homo</taxon>
    </lineage>
</organism>
<protein>
    <recommendedName>
        <fullName>Holliday junction recognition protein</fullName>
    </recommendedName>
    <alternativeName>
        <fullName>14-3-3-associated AKT substrate</fullName>
    </alternativeName>
    <alternativeName>
        <fullName>Fetal liver-expressing gene 1 protein</fullName>
    </alternativeName>
    <alternativeName>
        <fullName>Up-regulated in lung cancer 9</fullName>
    </alternativeName>
</protein>